<dbReference type="EC" id="7.1.1.2"/>
<dbReference type="EMBL" id="L29771">
    <property type="protein sequence ID" value="AAB03355.1"/>
    <property type="molecule type" value="Genomic_DNA"/>
</dbReference>
<dbReference type="EMBL" id="X14013">
    <property type="protein sequence ID" value="CAA32179.1"/>
    <property type="molecule type" value="Genomic_DNA"/>
</dbReference>
<dbReference type="PIR" id="T09865">
    <property type="entry name" value="T09865"/>
</dbReference>
<dbReference type="RefSeq" id="NP_008298.1">
    <property type="nucleotide sequence ID" value="NC_001717.1"/>
</dbReference>
<dbReference type="SMR" id="P69302"/>
<dbReference type="GeneID" id="807974"/>
<dbReference type="KEGG" id="omy:807974"/>
<dbReference type="CTD" id="4539"/>
<dbReference type="OrthoDB" id="6146597at2759"/>
<dbReference type="Proteomes" id="UP000694395">
    <property type="component" value="Unplaced"/>
</dbReference>
<dbReference type="GO" id="GO:0031966">
    <property type="term" value="C:mitochondrial membrane"/>
    <property type="evidence" value="ECO:0007669"/>
    <property type="project" value="UniProtKB-SubCell"/>
</dbReference>
<dbReference type="GO" id="GO:0045271">
    <property type="term" value="C:respiratory chain complex I"/>
    <property type="evidence" value="ECO:0000250"/>
    <property type="project" value="UniProtKB"/>
</dbReference>
<dbReference type="GO" id="GO:0008137">
    <property type="term" value="F:NADH dehydrogenase (ubiquinone) activity"/>
    <property type="evidence" value="ECO:0000250"/>
    <property type="project" value="UniProtKB"/>
</dbReference>
<dbReference type="GO" id="GO:0042773">
    <property type="term" value="P:ATP synthesis coupled electron transport"/>
    <property type="evidence" value="ECO:0007669"/>
    <property type="project" value="InterPro"/>
</dbReference>
<dbReference type="FunFam" id="1.10.287.3510:FF:000002">
    <property type="entry name" value="NADH-ubiquinone oxidoreductase chain 4L"/>
    <property type="match status" value="1"/>
</dbReference>
<dbReference type="Gene3D" id="1.10.287.3510">
    <property type="match status" value="1"/>
</dbReference>
<dbReference type="InterPro" id="IPR001133">
    <property type="entry name" value="NADH_UbQ_OxRdtase_chain4L/K"/>
</dbReference>
<dbReference type="InterPro" id="IPR039428">
    <property type="entry name" value="NUOK/Mnh_C1-like"/>
</dbReference>
<dbReference type="PANTHER" id="PTHR11434:SF0">
    <property type="entry name" value="NADH-UBIQUINONE OXIDOREDUCTASE CHAIN 4L"/>
    <property type="match status" value="1"/>
</dbReference>
<dbReference type="PANTHER" id="PTHR11434">
    <property type="entry name" value="NADH-UBIQUINONE OXIDOREDUCTASE SUBUNIT ND4L"/>
    <property type="match status" value="1"/>
</dbReference>
<dbReference type="Pfam" id="PF00420">
    <property type="entry name" value="Oxidored_q2"/>
    <property type="match status" value="1"/>
</dbReference>
<name>NU4LM_ONCMY</name>
<comment type="function">
    <text evidence="2">Core subunit of the mitochondrial membrane respiratory chain NADH dehydrogenase (Complex I) which catalyzes electron transfer from NADH through the respiratory chain, using ubiquinone as an electron acceptor. Part of the enzyme membrane arm which is embedded in the lipid bilayer and involved in proton translocation.</text>
</comment>
<comment type="catalytic activity">
    <reaction evidence="2">
        <text>a ubiquinone + NADH + 5 H(+)(in) = a ubiquinol + NAD(+) + 4 H(+)(out)</text>
        <dbReference type="Rhea" id="RHEA:29091"/>
        <dbReference type="Rhea" id="RHEA-COMP:9565"/>
        <dbReference type="Rhea" id="RHEA-COMP:9566"/>
        <dbReference type="ChEBI" id="CHEBI:15378"/>
        <dbReference type="ChEBI" id="CHEBI:16389"/>
        <dbReference type="ChEBI" id="CHEBI:17976"/>
        <dbReference type="ChEBI" id="CHEBI:57540"/>
        <dbReference type="ChEBI" id="CHEBI:57945"/>
        <dbReference type="EC" id="7.1.1.2"/>
    </reaction>
    <physiologicalReaction direction="left-to-right" evidence="2">
        <dbReference type="Rhea" id="RHEA:29092"/>
    </physiologicalReaction>
</comment>
<comment type="subcellular location">
    <subcellularLocation>
        <location evidence="1">Mitochondrion membrane</location>
        <topology evidence="1">Multi-pass membrane protein</topology>
    </subcellularLocation>
</comment>
<comment type="similarity">
    <text evidence="4">Belongs to the complex I subunit 4L family.</text>
</comment>
<reference key="1">
    <citation type="journal article" date="1995" name="J. Mol. Evol.">
        <title>The complete nucleotide sequence of the mitochondrial DNA genome of the rainbow trout, Oncorhynchus mykiss.</title>
        <authorList>
            <person name="Zardoya R."/>
            <person name="Garrido-Pertierra A."/>
            <person name="Bautista J.M."/>
        </authorList>
    </citation>
    <scope>NUCLEOTIDE SEQUENCE [GENOMIC DNA]</scope>
    <source>
        <tissue>Liver</tissue>
    </source>
</reference>
<reference key="2">
    <citation type="journal article" date="1989" name="J. Mol. Evol.">
        <title>Variation in salmonid mitochondrial DNA: evolutionary constraints and mechanisms of substitution.</title>
        <authorList>
            <person name="Thomas W.K."/>
            <person name="Beckenbach A.T."/>
        </authorList>
    </citation>
    <scope>NUCLEOTIDE SEQUENCE [GENOMIC DNA] OF 1-92</scope>
</reference>
<reference key="3">
    <citation type="journal article" date="1988" name="Curr. Genet.">
        <title>Cloning and sequence analysis of an XbaI fragment of rainbow trout mitochondrial DNA.</title>
        <authorList>
            <person name="Davidson W.S."/>
            <person name="Bartlett S.E."/>
            <person name="Birt T.P."/>
            <person name="Green J.M."/>
        </authorList>
    </citation>
    <scope>NUCLEOTIDE SEQUENCE [GENOMIC DNA] OF 1-35</scope>
    <source>
        <tissue>Liver</tissue>
    </source>
</reference>
<sequence>MTPVHFSFTSAFILGLMGLAFHRTHLLSALLCLEGMMLSLFIALSLWALQMEATGYSVAPMLLLAFSACEASAGLALLVATARTHGTDRLQSLNLLQC</sequence>
<feature type="chain" id="PRO_0000118459" description="NADH-ubiquinone oxidoreductase chain 4L">
    <location>
        <begin position="1"/>
        <end position="98"/>
    </location>
</feature>
<feature type="transmembrane region" description="Helical" evidence="3">
    <location>
        <begin position="1"/>
        <end position="21"/>
    </location>
</feature>
<feature type="transmembrane region" description="Helical" evidence="3">
    <location>
        <begin position="29"/>
        <end position="49"/>
    </location>
</feature>
<feature type="transmembrane region" description="Helical" evidence="3">
    <location>
        <begin position="58"/>
        <end position="78"/>
    </location>
</feature>
<feature type="sequence conflict" description="In Ref. 3; CAA32179." evidence="4" ref="3">
    <original>PVHFS</original>
    <variation>ALWHQYTSA</variation>
    <location>
        <begin position="3"/>
        <end position="7"/>
    </location>
</feature>
<feature type="sequence conflict" description="In Ref. 3." evidence="4" ref="3">
    <original>LL</original>
    <variation>FS</variation>
    <location>
        <begin position="26"/>
        <end position="27"/>
    </location>
</feature>
<feature type="sequence conflict" description="In Ref. 3." evidence="4" ref="3">
    <original>A</original>
    <variation>P</variation>
    <location>
        <position position="29"/>
    </location>
</feature>
<evidence type="ECO:0000250" key="1"/>
<evidence type="ECO:0000250" key="2">
    <source>
        <dbReference type="UniProtKB" id="P03901"/>
    </source>
</evidence>
<evidence type="ECO:0000255" key="3"/>
<evidence type="ECO:0000305" key="4"/>
<proteinExistence type="inferred from homology"/>
<geneLocation type="mitochondrion"/>
<accession>P69302</accession>
<accession>P11630</accession>
<gene>
    <name type="primary">MT-ND4L</name>
    <name type="synonym">MTND4L</name>
    <name type="synonym">NADH4L</name>
    <name type="synonym">ND4L</name>
</gene>
<protein>
    <recommendedName>
        <fullName>NADH-ubiquinone oxidoreductase chain 4L</fullName>
        <ecNumber>7.1.1.2</ecNumber>
    </recommendedName>
    <alternativeName>
        <fullName>NADH dehydrogenase subunit 4L</fullName>
    </alternativeName>
</protein>
<organism>
    <name type="scientific">Oncorhynchus mykiss</name>
    <name type="common">Rainbow trout</name>
    <name type="synonym">Salmo gairdneri</name>
    <dbReference type="NCBI Taxonomy" id="8022"/>
    <lineage>
        <taxon>Eukaryota</taxon>
        <taxon>Metazoa</taxon>
        <taxon>Chordata</taxon>
        <taxon>Craniata</taxon>
        <taxon>Vertebrata</taxon>
        <taxon>Euteleostomi</taxon>
        <taxon>Actinopterygii</taxon>
        <taxon>Neopterygii</taxon>
        <taxon>Teleostei</taxon>
        <taxon>Protacanthopterygii</taxon>
        <taxon>Salmoniformes</taxon>
        <taxon>Salmonidae</taxon>
        <taxon>Salmoninae</taxon>
        <taxon>Oncorhynchus</taxon>
    </lineage>
</organism>
<keyword id="KW-0249">Electron transport</keyword>
<keyword id="KW-0472">Membrane</keyword>
<keyword id="KW-0496">Mitochondrion</keyword>
<keyword id="KW-0520">NAD</keyword>
<keyword id="KW-0679">Respiratory chain</keyword>
<keyword id="KW-1278">Translocase</keyword>
<keyword id="KW-0812">Transmembrane</keyword>
<keyword id="KW-1133">Transmembrane helix</keyword>
<keyword id="KW-0813">Transport</keyword>
<keyword id="KW-0830">Ubiquinone</keyword>